<comment type="function">
    <text evidence="2 5">mRNA-binding protein required for maternal mRNA storage, translation and degradation during oocyte maturation (PubMed:27913641). Probably promotes formation of some phase-separated membraneless compartment that stores maternal mRNAs in oocytes: acts by undergoing liquid-liquid phase separation upon binding to maternal mRNAs (By similarity). Binds to the 3'-UTR of zona pellucida mRNAs, inhibiting their translation (PubMed:27913641).</text>
</comment>
<comment type="subcellular location">
    <subcellularLocation>
        <location evidence="1">Cytoplasm</location>
        <location evidence="1">Cytoplasmic ribonucleoprotein granule</location>
    </subcellularLocation>
</comment>
<comment type="tissue specificity">
    <text evidence="5">Specifically expressed in ovaries but absent in testes.</text>
</comment>
<comment type="developmental stage">
    <text evidence="5">In oocytes, highly expressed in primary growth (stage I) and cortical alveolus (stage II) oocytes. Also detected in Stage I and II oocytes but not in stage III oocytes (at protein level).</text>
</comment>
<comment type="domain">
    <text evidence="2">Disordered regions undergo liquid-liquid phase separation (LLPS) for the formation of membraneless compartments that store maternal mRNAs in oocytes.</text>
</comment>
<comment type="domain">
    <text evidence="1">The 3CxxC-type mediates binding to the 3'-UTR of mRNAs.</text>
</comment>
<comment type="disruption phenotype">
    <text evidence="5">Mutants exclusively develop into adult males, due to female-to-male sex reversal (PubMed:27913641). Defects are caused by early oocyte apoptosis mediated b&lt; the p53/tp53 pathway (PubMed:27913641).</text>
</comment>
<comment type="similarity">
    <text evidence="7">Belongs to the ZAR1 family.</text>
</comment>
<proteinExistence type="evidence at protein level"/>
<sequence>MATYGNETVDNYLYSSYNPYYYKYPKFKGWRQKAYFTNYGEGETYFDNHHRAQLKSILSQINPNLTPRLRKANTKDVGVQVNPKTDASIQCSLGPRTLLARKRDALRRRRQEVQTPGSPVSSGGVRFPRTQAVYSPVESRRLVSLFREEGEEEEDTDLEVTETVDSAEKLESAEKNVRKQGKKSAKQPLSPEKNINKQTETNEENTNEPVKTEQDDLKSKARVRFQSLEQKYGFYHCKDCNLRWESAYVWCVQGTNKVYFKQFCRTCQKSFNPYRVEDIACQTCKKARCTCSVKSRHVDPKRPHRQDLCGRCKGKRLSCDSTFSFKYII</sequence>
<organism>
    <name type="scientific">Danio rerio</name>
    <name type="common">Zebrafish</name>
    <name type="synonym">Brachydanio rerio</name>
    <dbReference type="NCBI Taxonomy" id="7955"/>
    <lineage>
        <taxon>Eukaryota</taxon>
        <taxon>Metazoa</taxon>
        <taxon>Chordata</taxon>
        <taxon>Craniata</taxon>
        <taxon>Vertebrata</taxon>
        <taxon>Euteleostomi</taxon>
        <taxon>Actinopterygii</taxon>
        <taxon>Neopterygii</taxon>
        <taxon>Teleostei</taxon>
        <taxon>Ostariophysi</taxon>
        <taxon>Cypriniformes</taxon>
        <taxon>Danionidae</taxon>
        <taxon>Danioninae</taxon>
        <taxon>Danio</taxon>
    </lineage>
</organism>
<evidence type="ECO:0000250" key="1">
    <source>
        <dbReference type="UniProtKB" id="C3VD30"/>
    </source>
</evidence>
<evidence type="ECO:0000250" key="2">
    <source>
        <dbReference type="UniProtKB" id="Q80SU3"/>
    </source>
</evidence>
<evidence type="ECO:0000255" key="3"/>
<evidence type="ECO:0000256" key="4">
    <source>
        <dbReference type="SAM" id="MobiDB-lite"/>
    </source>
</evidence>
<evidence type="ECO:0000269" key="5">
    <source>
    </source>
</evidence>
<evidence type="ECO:0000303" key="6">
    <source>
    </source>
</evidence>
<evidence type="ECO:0000305" key="7"/>
<keyword id="KW-0963">Cytoplasm</keyword>
<keyword id="KW-0217">Developmental protein</keyword>
<keyword id="KW-0221">Differentiation</keyword>
<keyword id="KW-0479">Metal-binding</keyword>
<keyword id="KW-0896">Oogenesis</keyword>
<keyword id="KW-1185">Reference proteome</keyword>
<keyword id="KW-0694">RNA-binding</keyword>
<keyword id="KW-0862">Zinc</keyword>
<keyword id="KW-0863">Zinc-finger</keyword>
<gene>
    <name evidence="6" type="primary">zar1</name>
</gene>
<name>ZAR1_DANRE</name>
<dbReference type="EMBL" id="AY283178">
    <property type="protein sequence ID" value="AAP37040.1"/>
    <property type="molecule type" value="mRNA"/>
</dbReference>
<dbReference type="FunCoup" id="Q7T3T8">
    <property type="interactions" value="1773"/>
</dbReference>
<dbReference type="STRING" id="7955.ENSDARP00000022641"/>
<dbReference type="PaxDb" id="7955-ENSDARP00000022641"/>
<dbReference type="AGR" id="ZFIN:ZDB-GENE-030818-1"/>
<dbReference type="ZFIN" id="ZDB-GENE-030818-1">
    <property type="gene designation" value="zar1"/>
</dbReference>
<dbReference type="eggNOG" id="ENOG502QWC9">
    <property type="taxonomic scope" value="Eukaryota"/>
</dbReference>
<dbReference type="InParanoid" id="Q7T3T8"/>
<dbReference type="PhylomeDB" id="Q7T3T8"/>
<dbReference type="PRO" id="PR:Q7T3T8"/>
<dbReference type="Proteomes" id="UP000000437">
    <property type="component" value="Unplaced"/>
</dbReference>
<dbReference type="GO" id="GO:0005737">
    <property type="term" value="C:cytoplasm"/>
    <property type="evidence" value="ECO:0000318"/>
    <property type="project" value="GO_Central"/>
</dbReference>
<dbReference type="GO" id="GO:0036464">
    <property type="term" value="C:cytoplasmic ribonucleoprotein granule"/>
    <property type="evidence" value="ECO:0007669"/>
    <property type="project" value="UniProtKB-SubCell"/>
</dbReference>
<dbReference type="GO" id="GO:0032991">
    <property type="term" value="C:protein-containing complex"/>
    <property type="evidence" value="ECO:0000353"/>
    <property type="project" value="ZFIN"/>
</dbReference>
<dbReference type="GO" id="GO:0003729">
    <property type="term" value="F:mRNA binding"/>
    <property type="evidence" value="ECO:0000314"/>
    <property type="project" value="ZFIN"/>
</dbReference>
<dbReference type="GO" id="GO:0030371">
    <property type="term" value="F:translation repressor activity"/>
    <property type="evidence" value="ECO:0000314"/>
    <property type="project" value="ZFIN"/>
</dbReference>
<dbReference type="GO" id="GO:0008270">
    <property type="term" value="F:zinc ion binding"/>
    <property type="evidence" value="ECO:0007669"/>
    <property type="project" value="UniProtKB-KW"/>
</dbReference>
<dbReference type="GO" id="GO:0017148">
    <property type="term" value="P:negative regulation of translation"/>
    <property type="evidence" value="ECO:0000314"/>
    <property type="project" value="ZFIN"/>
</dbReference>
<dbReference type="GO" id="GO:0048477">
    <property type="term" value="P:oogenesis"/>
    <property type="evidence" value="ECO:0007669"/>
    <property type="project" value="UniProtKB-KW"/>
</dbReference>
<dbReference type="GO" id="GO:1905881">
    <property type="term" value="P:positive regulation of oogenesis"/>
    <property type="evidence" value="ECO:0000315"/>
    <property type="project" value="ZFIN"/>
</dbReference>
<dbReference type="GO" id="GO:0006412">
    <property type="term" value="P:translation"/>
    <property type="evidence" value="ECO:0000315"/>
    <property type="project" value="ZFIN"/>
</dbReference>
<dbReference type="InterPro" id="IPR026775">
    <property type="entry name" value="Zar1"/>
</dbReference>
<dbReference type="InterPro" id="IPR027377">
    <property type="entry name" value="ZAR1/RTP1-5-like_Znf-3CxxC"/>
</dbReference>
<dbReference type="PANTHER" id="PTHR31054:SF6">
    <property type="entry name" value="ZYGOTE ARREST PROTEIN 1"/>
    <property type="match status" value="1"/>
</dbReference>
<dbReference type="PANTHER" id="PTHR31054">
    <property type="entry name" value="ZYGOTE ARREST PROTEIN 1-LIKE ISOFORM X1"/>
    <property type="match status" value="1"/>
</dbReference>
<dbReference type="Pfam" id="PF13695">
    <property type="entry name" value="Zn_ribbon_3CxxC"/>
    <property type="match status" value="1"/>
</dbReference>
<dbReference type="SMART" id="SM01328">
    <property type="entry name" value="zf-3CxxC"/>
    <property type="match status" value="1"/>
</dbReference>
<feature type="chain" id="PRO_0000187014" description="Zygote arrest protein 1">
    <location>
        <begin position="1"/>
        <end position="329"/>
    </location>
</feature>
<feature type="zinc finger region" description="3CxxC-type" evidence="3">
    <location>
        <begin position="231"/>
        <end position="314"/>
    </location>
</feature>
<feature type="region of interest" description="Disordered" evidence="4">
    <location>
        <begin position="106"/>
        <end position="132"/>
    </location>
</feature>
<feature type="region of interest" description="Disordered" evidence="4">
    <location>
        <begin position="146"/>
        <end position="218"/>
    </location>
</feature>
<feature type="compositionally biased region" description="Acidic residues" evidence="4">
    <location>
        <begin position="149"/>
        <end position="162"/>
    </location>
</feature>
<feature type="compositionally biased region" description="Basic and acidic residues" evidence="4">
    <location>
        <begin position="166"/>
        <end position="177"/>
    </location>
</feature>
<reference key="1">
    <citation type="journal article" date="2003" name="Biol. Reprod.">
        <title>Zygote arrest 1 (Zar1) is an evolutionarily conserved gene expressed in vertebrate ovaries.</title>
        <authorList>
            <person name="Wu X."/>
            <person name="Wang P."/>
            <person name="Brown C.A."/>
            <person name="Zilinski C.A."/>
            <person name="Matzuk M.M."/>
        </authorList>
    </citation>
    <scope>NUCLEOTIDE SEQUENCE [MRNA]</scope>
    <source>
        <tissue>Ovary</tissue>
    </source>
</reference>
<reference key="2">
    <citation type="journal article" date="2017" name="Development">
        <title>Translation repression by maternal RNA binding protein Zar1 is essential for early oogenesis in zebrafish.</title>
        <authorList>
            <person name="Miao L."/>
            <person name="Yuan Y."/>
            <person name="Cheng F."/>
            <person name="Fang J."/>
            <person name="Zhou F."/>
            <person name="Ma W."/>
            <person name="Jiang Y."/>
            <person name="Huang X."/>
            <person name="Wang Y."/>
            <person name="Shan L."/>
            <person name="Chen D."/>
            <person name="Zhang J."/>
        </authorList>
    </citation>
    <scope>FUNCTION</scope>
    <scope>TISSUE SPECIFICITY</scope>
    <scope>DEVELOPMENTAL STAGE</scope>
    <scope>DISRUPTION PHENOTYPE</scope>
</reference>
<accession>Q7T3T8</accession>
<protein>
    <recommendedName>
        <fullName evidence="6">Zygote arrest protein 1</fullName>
    </recommendedName>
</protein>